<comment type="function">
    <text evidence="1">Catalyzes the hydrolysis of N-succinyl-L,L-diaminopimelic acid (SDAP), forming succinate and LL-2,6-diaminopimelate (DAP), an intermediate involved in the bacterial biosynthesis of lysine and meso-diaminopimelic acid, an essential component of bacterial cell walls.</text>
</comment>
<comment type="catalytic activity">
    <reaction evidence="1">
        <text>N-succinyl-(2S,6S)-2,6-diaminopimelate + H2O = (2S,6S)-2,6-diaminopimelate + succinate</text>
        <dbReference type="Rhea" id="RHEA:22608"/>
        <dbReference type="ChEBI" id="CHEBI:15377"/>
        <dbReference type="ChEBI" id="CHEBI:30031"/>
        <dbReference type="ChEBI" id="CHEBI:57609"/>
        <dbReference type="ChEBI" id="CHEBI:58087"/>
        <dbReference type="EC" id="3.5.1.18"/>
    </reaction>
</comment>
<comment type="cofactor">
    <cofactor evidence="1">
        <name>Zn(2+)</name>
        <dbReference type="ChEBI" id="CHEBI:29105"/>
    </cofactor>
    <cofactor evidence="1">
        <name>Co(2+)</name>
        <dbReference type="ChEBI" id="CHEBI:48828"/>
    </cofactor>
    <text evidence="1">Binds 2 Zn(2+) or Co(2+) ions per subunit.</text>
</comment>
<comment type="pathway">
    <text evidence="1">Amino-acid biosynthesis; L-lysine biosynthesis via DAP pathway; LL-2,6-diaminopimelate from (S)-tetrahydrodipicolinate (succinylase route): step 3/3.</text>
</comment>
<comment type="subunit">
    <text evidence="1">Homodimer.</text>
</comment>
<comment type="similarity">
    <text evidence="1">Belongs to the peptidase M20A family. DapE subfamily.</text>
</comment>
<organism>
    <name type="scientific">Acidithiobacillus ferrooxidans (strain ATCC 53993 / BNL-5-31)</name>
    <name type="common">Leptospirillum ferrooxidans (ATCC 53993)</name>
    <dbReference type="NCBI Taxonomy" id="380394"/>
    <lineage>
        <taxon>Bacteria</taxon>
        <taxon>Pseudomonadati</taxon>
        <taxon>Pseudomonadota</taxon>
        <taxon>Acidithiobacillia</taxon>
        <taxon>Acidithiobacillales</taxon>
        <taxon>Acidithiobacillaceae</taxon>
        <taxon>Acidithiobacillus</taxon>
    </lineage>
</organism>
<keyword id="KW-0028">Amino-acid biosynthesis</keyword>
<keyword id="KW-0170">Cobalt</keyword>
<keyword id="KW-0220">Diaminopimelate biosynthesis</keyword>
<keyword id="KW-0378">Hydrolase</keyword>
<keyword id="KW-0457">Lysine biosynthesis</keyword>
<keyword id="KW-0479">Metal-binding</keyword>
<keyword id="KW-0862">Zinc</keyword>
<feature type="chain" id="PRO_0000375439" description="Succinyl-diaminopimelate desuccinylase">
    <location>
        <begin position="1"/>
        <end position="382"/>
    </location>
</feature>
<feature type="active site" evidence="1">
    <location>
        <position position="70"/>
    </location>
</feature>
<feature type="active site" description="Proton acceptor" evidence="1">
    <location>
        <position position="135"/>
    </location>
</feature>
<feature type="binding site" evidence="1">
    <location>
        <position position="68"/>
    </location>
    <ligand>
        <name>Zn(2+)</name>
        <dbReference type="ChEBI" id="CHEBI:29105"/>
        <label>1</label>
    </ligand>
</feature>
<feature type="binding site" evidence="1">
    <location>
        <position position="101"/>
    </location>
    <ligand>
        <name>Zn(2+)</name>
        <dbReference type="ChEBI" id="CHEBI:29105"/>
        <label>1</label>
    </ligand>
</feature>
<feature type="binding site" evidence="1">
    <location>
        <position position="101"/>
    </location>
    <ligand>
        <name>Zn(2+)</name>
        <dbReference type="ChEBI" id="CHEBI:29105"/>
        <label>2</label>
    </ligand>
</feature>
<feature type="binding site" evidence="1">
    <location>
        <position position="136"/>
    </location>
    <ligand>
        <name>Zn(2+)</name>
        <dbReference type="ChEBI" id="CHEBI:29105"/>
        <label>2</label>
    </ligand>
</feature>
<feature type="binding site" evidence="1">
    <location>
        <position position="164"/>
    </location>
    <ligand>
        <name>Zn(2+)</name>
        <dbReference type="ChEBI" id="CHEBI:29105"/>
        <label>1</label>
    </ligand>
</feature>
<feature type="binding site" evidence="1">
    <location>
        <position position="350"/>
    </location>
    <ligand>
        <name>Zn(2+)</name>
        <dbReference type="ChEBI" id="CHEBI:29105"/>
        <label>2</label>
    </ligand>
</feature>
<name>DAPE_ACIF5</name>
<proteinExistence type="inferred from homology"/>
<gene>
    <name evidence="1" type="primary">dapE</name>
    <name type="ordered locus">Lferr_1496</name>
</gene>
<sequence length="382" mass="41156">MGKSAVLELAEDLISRPSVTPEDAGCQELMIARLKAVGFRVTRLPANGVENFWAERGGAGPRLCFAGHTDVVPSGPLAEWQNDPFQPIIRDGMLYGRGAADMKGSLAAMVVAAERFVALHPAHSGRLAFLITSDEEGIATHGTRHVVDWLREHGETIDWCVVGEPSSEKVLGDVIKNGRRGSLNGRLTVHGIQGHVAYPDKADNPIHRAFRPLADLVDQSWDAGNDFFPPTRLQFSNIHAGTGANNVIPGQLQADFNFRFSTESTPESLQAGVHKILDASAMRYTIDWQLSGPPFFTAPGPLVAATQKALQAVEQRVAQLSTGGGTSDGRFIAQLGGQVVELGPVNATIHKINECVAVADLEHLAQIYMEIMVHLLETANGR</sequence>
<reference key="1">
    <citation type="submission" date="2008-08" db="EMBL/GenBank/DDBJ databases">
        <title>Complete sequence of Acidithiobacillus ferrooxidans ATCC 53993.</title>
        <authorList>
            <person name="Lucas S."/>
            <person name="Copeland A."/>
            <person name="Lapidus A."/>
            <person name="Glavina del Rio T."/>
            <person name="Dalin E."/>
            <person name="Tice H."/>
            <person name="Bruce D."/>
            <person name="Goodwin L."/>
            <person name="Pitluck S."/>
            <person name="Sims D."/>
            <person name="Brettin T."/>
            <person name="Detter J.C."/>
            <person name="Han C."/>
            <person name="Kuske C.R."/>
            <person name="Larimer F."/>
            <person name="Land M."/>
            <person name="Hauser L."/>
            <person name="Kyrpides N."/>
            <person name="Lykidis A."/>
            <person name="Borole A.P."/>
        </authorList>
    </citation>
    <scope>NUCLEOTIDE SEQUENCE [LARGE SCALE GENOMIC DNA]</scope>
    <source>
        <strain>ATCC 53993 / BNL-5-31</strain>
    </source>
</reference>
<dbReference type="EC" id="3.5.1.18" evidence="1"/>
<dbReference type="EMBL" id="CP001132">
    <property type="protein sequence ID" value="ACH83724.1"/>
    <property type="molecule type" value="Genomic_DNA"/>
</dbReference>
<dbReference type="RefSeq" id="WP_012536780.1">
    <property type="nucleotide sequence ID" value="NC_011206.1"/>
</dbReference>
<dbReference type="SMR" id="B5ES53"/>
<dbReference type="GeneID" id="65280986"/>
<dbReference type="KEGG" id="afe:Lferr_1496"/>
<dbReference type="eggNOG" id="COG0624">
    <property type="taxonomic scope" value="Bacteria"/>
</dbReference>
<dbReference type="HOGENOM" id="CLU_021802_4_0_6"/>
<dbReference type="UniPathway" id="UPA00034">
    <property type="reaction ID" value="UER00021"/>
</dbReference>
<dbReference type="GO" id="GO:0008777">
    <property type="term" value="F:acetylornithine deacetylase activity"/>
    <property type="evidence" value="ECO:0007669"/>
    <property type="project" value="TreeGrafter"/>
</dbReference>
<dbReference type="GO" id="GO:0050897">
    <property type="term" value="F:cobalt ion binding"/>
    <property type="evidence" value="ECO:0007669"/>
    <property type="project" value="UniProtKB-UniRule"/>
</dbReference>
<dbReference type="GO" id="GO:0009014">
    <property type="term" value="F:succinyl-diaminopimelate desuccinylase activity"/>
    <property type="evidence" value="ECO:0007669"/>
    <property type="project" value="UniProtKB-UniRule"/>
</dbReference>
<dbReference type="GO" id="GO:0008270">
    <property type="term" value="F:zinc ion binding"/>
    <property type="evidence" value="ECO:0007669"/>
    <property type="project" value="UniProtKB-UniRule"/>
</dbReference>
<dbReference type="GO" id="GO:0019877">
    <property type="term" value="P:diaminopimelate biosynthetic process"/>
    <property type="evidence" value="ECO:0007669"/>
    <property type="project" value="UniProtKB-UniRule"/>
</dbReference>
<dbReference type="GO" id="GO:0006526">
    <property type="term" value="P:L-arginine biosynthetic process"/>
    <property type="evidence" value="ECO:0007669"/>
    <property type="project" value="TreeGrafter"/>
</dbReference>
<dbReference type="GO" id="GO:0009089">
    <property type="term" value="P:lysine biosynthetic process via diaminopimelate"/>
    <property type="evidence" value="ECO:0007669"/>
    <property type="project" value="UniProtKB-UniRule"/>
</dbReference>
<dbReference type="CDD" id="cd03891">
    <property type="entry name" value="M20_DapE_proteobac"/>
    <property type="match status" value="1"/>
</dbReference>
<dbReference type="FunFam" id="3.40.630.10:FF:000005">
    <property type="entry name" value="Succinyl-diaminopimelate desuccinylase"/>
    <property type="match status" value="1"/>
</dbReference>
<dbReference type="Gene3D" id="3.40.630.10">
    <property type="entry name" value="Zn peptidases"/>
    <property type="match status" value="2"/>
</dbReference>
<dbReference type="HAMAP" id="MF_01690">
    <property type="entry name" value="DapE"/>
    <property type="match status" value="1"/>
</dbReference>
<dbReference type="InterPro" id="IPR001261">
    <property type="entry name" value="ArgE/DapE_CS"/>
</dbReference>
<dbReference type="InterPro" id="IPR036264">
    <property type="entry name" value="Bact_exopeptidase_dim_dom"/>
</dbReference>
<dbReference type="InterPro" id="IPR005941">
    <property type="entry name" value="DapE_proteobac"/>
</dbReference>
<dbReference type="InterPro" id="IPR002933">
    <property type="entry name" value="Peptidase_M20"/>
</dbReference>
<dbReference type="InterPro" id="IPR011650">
    <property type="entry name" value="Peptidase_M20_dimer"/>
</dbReference>
<dbReference type="InterPro" id="IPR050072">
    <property type="entry name" value="Peptidase_M20A"/>
</dbReference>
<dbReference type="NCBIfam" id="TIGR01246">
    <property type="entry name" value="dapE_proteo"/>
    <property type="match status" value="1"/>
</dbReference>
<dbReference type="NCBIfam" id="NF009557">
    <property type="entry name" value="PRK13009.1"/>
    <property type="match status" value="1"/>
</dbReference>
<dbReference type="PANTHER" id="PTHR43808">
    <property type="entry name" value="ACETYLORNITHINE DEACETYLASE"/>
    <property type="match status" value="1"/>
</dbReference>
<dbReference type="PANTHER" id="PTHR43808:SF31">
    <property type="entry name" value="N-ACETYL-L-CITRULLINE DEACETYLASE"/>
    <property type="match status" value="1"/>
</dbReference>
<dbReference type="Pfam" id="PF07687">
    <property type="entry name" value="M20_dimer"/>
    <property type="match status" value="1"/>
</dbReference>
<dbReference type="Pfam" id="PF01546">
    <property type="entry name" value="Peptidase_M20"/>
    <property type="match status" value="1"/>
</dbReference>
<dbReference type="SUPFAM" id="SSF55031">
    <property type="entry name" value="Bacterial exopeptidase dimerisation domain"/>
    <property type="match status" value="1"/>
</dbReference>
<dbReference type="SUPFAM" id="SSF53187">
    <property type="entry name" value="Zn-dependent exopeptidases"/>
    <property type="match status" value="1"/>
</dbReference>
<dbReference type="PROSITE" id="PS00759">
    <property type="entry name" value="ARGE_DAPE_CPG2_2"/>
    <property type="match status" value="1"/>
</dbReference>
<evidence type="ECO:0000255" key="1">
    <source>
        <dbReference type="HAMAP-Rule" id="MF_01690"/>
    </source>
</evidence>
<protein>
    <recommendedName>
        <fullName evidence="1">Succinyl-diaminopimelate desuccinylase</fullName>
        <shortName evidence="1">SDAP desuccinylase</shortName>
        <ecNumber evidence="1">3.5.1.18</ecNumber>
    </recommendedName>
    <alternativeName>
        <fullName evidence="1">N-succinyl-LL-2,6-diaminoheptanedioate amidohydrolase</fullName>
    </alternativeName>
</protein>
<accession>B5ES53</accession>